<organism>
    <name type="scientific">Pongo abelii</name>
    <name type="common">Sumatran orangutan</name>
    <name type="synonym">Pongo pygmaeus abelii</name>
    <dbReference type="NCBI Taxonomy" id="9601"/>
    <lineage>
        <taxon>Eukaryota</taxon>
        <taxon>Metazoa</taxon>
        <taxon>Chordata</taxon>
        <taxon>Craniata</taxon>
        <taxon>Vertebrata</taxon>
        <taxon>Euteleostomi</taxon>
        <taxon>Mammalia</taxon>
        <taxon>Eutheria</taxon>
        <taxon>Euarchontoglires</taxon>
        <taxon>Primates</taxon>
        <taxon>Haplorrhini</taxon>
        <taxon>Catarrhini</taxon>
        <taxon>Hominidae</taxon>
        <taxon>Pongo</taxon>
    </lineage>
</organism>
<accession>Q5R5E7</accession>
<gene>
    <name type="primary">HIBADH</name>
</gene>
<dbReference type="EC" id="1.1.1.31"/>
<dbReference type="EMBL" id="CR860914">
    <property type="protein sequence ID" value="CAH93019.1"/>
    <property type="molecule type" value="mRNA"/>
</dbReference>
<dbReference type="RefSeq" id="NP_001127621.1">
    <property type="nucleotide sequence ID" value="NM_001134149.1"/>
</dbReference>
<dbReference type="RefSeq" id="XP_009241202.1">
    <property type="nucleotide sequence ID" value="XM_009242927.1"/>
</dbReference>
<dbReference type="SMR" id="Q5R5E7"/>
<dbReference type="FunCoup" id="Q5R5E7">
    <property type="interactions" value="1492"/>
</dbReference>
<dbReference type="STRING" id="9601.ENSPPYP00000019832"/>
<dbReference type="Ensembl" id="ENSPPYT00000020615.3">
    <property type="protein sequence ID" value="ENSPPYP00000019832.2"/>
    <property type="gene ID" value="ENSPPYG00000017693.3"/>
</dbReference>
<dbReference type="GeneID" id="100189883"/>
<dbReference type="CTD" id="11112"/>
<dbReference type="eggNOG" id="KOG0409">
    <property type="taxonomic scope" value="Eukaryota"/>
</dbReference>
<dbReference type="GeneTree" id="ENSGT00940000155255"/>
<dbReference type="HOGENOM" id="CLU_035117_6_0_1"/>
<dbReference type="InParanoid" id="Q5R5E7"/>
<dbReference type="OMA" id="MGKKVWH"/>
<dbReference type="OrthoDB" id="435038at2759"/>
<dbReference type="TreeFam" id="TF314043"/>
<dbReference type="UniPathway" id="UPA00362"/>
<dbReference type="Proteomes" id="UP000001595">
    <property type="component" value="Chromosome 7"/>
</dbReference>
<dbReference type="GO" id="GO:0005739">
    <property type="term" value="C:mitochondrion"/>
    <property type="evidence" value="ECO:0007669"/>
    <property type="project" value="UniProtKB-SubCell"/>
</dbReference>
<dbReference type="GO" id="GO:0008442">
    <property type="term" value="F:3-hydroxyisobutyrate dehydrogenase activity"/>
    <property type="evidence" value="ECO:0000250"/>
    <property type="project" value="UniProtKB"/>
</dbReference>
<dbReference type="GO" id="GO:0051287">
    <property type="term" value="F:NAD binding"/>
    <property type="evidence" value="ECO:0007669"/>
    <property type="project" value="InterPro"/>
</dbReference>
<dbReference type="GO" id="GO:0050661">
    <property type="term" value="F:NADP binding"/>
    <property type="evidence" value="ECO:0007669"/>
    <property type="project" value="InterPro"/>
</dbReference>
<dbReference type="GO" id="GO:0006574">
    <property type="term" value="P:valine catabolic process"/>
    <property type="evidence" value="ECO:0000250"/>
    <property type="project" value="UniProtKB"/>
</dbReference>
<dbReference type="FunFam" id="1.10.1040.10:FF:000006">
    <property type="entry name" value="3-hydroxyisobutyrate dehydrogenase"/>
    <property type="match status" value="1"/>
</dbReference>
<dbReference type="FunFam" id="3.40.50.720:FF:000119">
    <property type="entry name" value="3-hydroxyisobutyrate dehydrogenase"/>
    <property type="match status" value="1"/>
</dbReference>
<dbReference type="Gene3D" id="1.10.1040.10">
    <property type="entry name" value="N-(1-d-carboxylethyl)-l-norvaline Dehydrogenase, domain 2"/>
    <property type="match status" value="1"/>
</dbReference>
<dbReference type="Gene3D" id="3.40.50.720">
    <property type="entry name" value="NAD(P)-binding Rossmann-like Domain"/>
    <property type="match status" value="1"/>
</dbReference>
<dbReference type="InterPro" id="IPR002204">
    <property type="entry name" value="3-OH-isobutyrate_DH-rel_CS"/>
</dbReference>
<dbReference type="InterPro" id="IPR008927">
    <property type="entry name" value="6-PGluconate_DH-like_C_sf"/>
</dbReference>
<dbReference type="InterPro" id="IPR013328">
    <property type="entry name" value="6PGD_dom2"/>
</dbReference>
<dbReference type="InterPro" id="IPR006115">
    <property type="entry name" value="6PGDH_NADP-bd"/>
</dbReference>
<dbReference type="InterPro" id="IPR011548">
    <property type="entry name" value="HIBADH"/>
</dbReference>
<dbReference type="InterPro" id="IPR029154">
    <property type="entry name" value="HIBADH-like_NADP-bd"/>
</dbReference>
<dbReference type="InterPro" id="IPR015815">
    <property type="entry name" value="HIBADH-related"/>
</dbReference>
<dbReference type="InterPro" id="IPR036291">
    <property type="entry name" value="NAD(P)-bd_dom_sf"/>
</dbReference>
<dbReference type="NCBIfam" id="TIGR01692">
    <property type="entry name" value="HIBADH"/>
    <property type="match status" value="1"/>
</dbReference>
<dbReference type="PANTHER" id="PTHR22981:SF7">
    <property type="entry name" value="3-HYDROXYISOBUTYRATE DEHYDROGENASE, MITOCHONDRIAL"/>
    <property type="match status" value="1"/>
</dbReference>
<dbReference type="PANTHER" id="PTHR22981">
    <property type="entry name" value="3-HYDROXYISOBUTYRATE DEHYDROGENASE-RELATED"/>
    <property type="match status" value="1"/>
</dbReference>
<dbReference type="Pfam" id="PF14833">
    <property type="entry name" value="NAD_binding_11"/>
    <property type="match status" value="1"/>
</dbReference>
<dbReference type="Pfam" id="PF03446">
    <property type="entry name" value="NAD_binding_2"/>
    <property type="match status" value="1"/>
</dbReference>
<dbReference type="PIRSF" id="PIRSF000103">
    <property type="entry name" value="HIBADH"/>
    <property type="match status" value="1"/>
</dbReference>
<dbReference type="SUPFAM" id="SSF48179">
    <property type="entry name" value="6-phosphogluconate dehydrogenase C-terminal domain-like"/>
    <property type="match status" value="1"/>
</dbReference>
<dbReference type="SUPFAM" id="SSF51735">
    <property type="entry name" value="NAD(P)-binding Rossmann-fold domains"/>
    <property type="match status" value="1"/>
</dbReference>
<dbReference type="PROSITE" id="PS00895">
    <property type="entry name" value="3_HYDROXYISOBUT_DH"/>
    <property type="match status" value="1"/>
</dbReference>
<protein>
    <recommendedName>
        <fullName>3-hydroxyisobutyrate dehydrogenase, mitochondrial</fullName>
        <shortName>HIBADH</shortName>
        <ecNumber>1.1.1.31</ecNumber>
    </recommendedName>
</protein>
<evidence type="ECO:0000250" key="1"/>
<evidence type="ECO:0000250" key="2">
    <source>
        <dbReference type="UniProtKB" id="Q99L13"/>
    </source>
</evidence>
<evidence type="ECO:0000305" key="3"/>
<feature type="transit peptide" description="Mitochondrion" evidence="1">
    <location>
        <begin position="1"/>
        <end position="36"/>
    </location>
</feature>
<feature type="chain" id="PRO_0000290341" description="3-hydroxyisobutyrate dehydrogenase, mitochondrial">
    <location>
        <begin position="37"/>
        <end position="336"/>
    </location>
</feature>
<feature type="active site" evidence="1">
    <location>
        <position position="209"/>
    </location>
</feature>
<feature type="binding site" evidence="1">
    <location>
        <begin position="40"/>
        <end position="69"/>
    </location>
    <ligand>
        <name>NAD(+)</name>
        <dbReference type="ChEBI" id="CHEBI:57540"/>
    </ligand>
</feature>
<feature type="binding site" evidence="1">
    <location>
        <begin position="103"/>
        <end position="104"/>
    </location>
    <ligand>
        <name>NAD(+)</name>
        <dbReference type="ChEBI" id="CHEBI:57540"/>
    </ligand>
</feature>
<feature type="binding site" evidence="1">
    <location>
        <position position="108"/>
    </location>
    <ligand>
        <name>NAD(+)</name>
        <dbReference type="ChEBI" id="CHEBI:57540"/>
    </ligand>
</feature>
<feature type="binding site" evidence="1">
    <location>
        <position position="134"/>
    </location>
    <ligand>
        <name>NAD(+)</name>
        <dbReference type="ChEBI" id="CHEBI:57540"/>
    </ligand>
</feature>
<feature type="binding site" evidence="1">
    <location>
        <position position="284"/>
    </location>
    <ligand>
        <name>NAD(+)</name>
        <dbReference type="ChEBI" id="CHEBI:57540"/>
    </ligand>
</feature>
<feature type="modified residue" description="N6-acetyllysine; alternate" evidence="2">
    <location>
        <position position="60"/>
    </location>
</feature>
<feature type="modified residue" description="N6-succinyllysine; alternate" evidence="2">
    <location>
        <position position="60"/>
    </location>
</feature>
<feature type="modified residue" description="N6-acetyllysine; alternate" evidence="2">
    <location>
        <position position="76"/>
    </location>
</feature>
<feature type="modified residue" description="N6-succinyllysine; alternate" evidence="2">
    <location>
        <position position="76"/>
    </location>
</feature>
<feature type="modified residue" description="N6-succinyllysine" evidence="2">
    <location>
        <position position="95"/>
    </location>
</feature>
<feature type="modified residue" description="N6-acetyllysine" evidence="2">
    <location>
        <position position="121"/>
    </location>
</feature>
<feature type="modified residue" description="N6-succinyllysine" evidence="2">
    <location>
        <position position="141"/>
    </location>
</feature>
<feature type="modified residue" description="N6-acetyllysine" evidence="2">
    <location>
        <position position="145"/>
    </location>
</feature>
<feature type="modified residue" description="N6-acetyllysine; alternate" evidence="2">
    <location>
        <position position="149"/>
    </location>
</feature>
<feature type="modified residue" description="N6-succinyllysine; alternate" evidence="2">
    <location>
        <position position="149"/>
    </location>
</feature>
<feature type="modified residue" description="N6-acetyllysine; alternate" evidence="2">
    <location>
        <position position="238"/>
    </location>
</feature>
<feature type="modified residue" description="N6-succinyllysine; alternate" evidence="2">
    <location>
        <position position="238"/>
    </location>
</feature>
<feature type="modified residue" description="N6-acetyllysine; alternate" evidence="2">
    <location>
        <position position="242"/>
    </location>
</feature>
<feature type="modified residue" description="N6-succinyllysine; alternate" evidence="2">
    <location>
        <position position="242"/>
    </location>
</feature>
<feature type="modified residue" description="N6-succinyllysine" evidence="2">
    <location>
        <position position="297"/>
    </location>
</feature>
<feature type="modified residue" description="N6-acetyllysine; alternate" evidence="2">
    <location>
        <position position="321"/>
    </location>
</feature>
<feature type="modified residue" description="N6-succinyllysine; alternate" evidence="2">
    <location>
        <position position="321"/>
    </location>
</feature>
<keyword id="KW-0007">Acetylation</keyword>
<keyword id="KW-0101">Branched-chain amino acid catabolism</keyword>
<keyword id="KW-0496">Mitochondrion</keyword>
<keyword id="KW-0520">NAD</keyword>
<keyword id="KW-0560">Oxidoreductase</keyword>
<keyword id="KW-1185">Reference proteome</keyword>
<keyword id="KW-0809">Transit peptide</keyword>
<comment type="catalytic activity">
    <reaction>
        <text>3-hydroxy-2-methylpropanoate + NAD(+) = 2-methyl-3-oxopropanoate + NADH + H(+)</text>
        <dbReference type="Rhea" id="RHEA:17681"/>
        <dbReference type="ChEBI" id="CHEBI:11805"/>
        <dbReference type="ChEBI" id="CHEBI:15378"/>
        <dbReference type="ChEBI" id="CHEBI:57540"/>
        <dbReference type="ChEBI" id="CHEBI:57700"/>
        <dbReference type="ChEBI" id="CHEBI:57945"/>
        <dbReference type="EC" id="1.1.1.31"/>
    </reaction>
</comment>
<comment type="pathway">
    <text>Amino-acid degradation; L-valine degradation.</text>
</comment>
<comment type="subunit">
    <text evidence="1">Homodimer.</text>
</comment>
<comment type="subcellular location">
    <subcellularLocation>
        <location evidence="1">Mitochondrion</location>
    </subcellularLocation>
</comment>
<comment type="similarity">
    <text evidence="3">Belongs to the HIBADH-related family. 3-hydroxyisobutyrate dehydrogenase subfamily.</text>
</comment>
<name>3HIDH_PONAB</name>
<reference key="1">
    <citation type="submission" date="2004-11" db="EMBL/GenBank/DDBJ databases">
        <authorList>
            <consortium name="The German cDNA consortium"/>
        </authorList>
    </citation>
    <scope>NUCLEOTIDE SEQUENCE [LARGE SCALE MRNA]</scope>
    <source>
        <tissue>Kidney</tissue>
    </source>
</reference>
<proteinExistence type="evidence at transcript level"/>
<sequence length="336" mass="35299">MAASLRLLGAASGLRYWSRRLRPAAGSFAAVCSRSVASKTPVGFIGLGNMGNPMAKNLMKHGYPLIIYDVFPDACKEFQDAGEQVVSSPADVAEKADRIITMLPTSINAIEAYSGANGILKKVKKGSLLIDSSTIDPAVSKELAKEVEKMGAVFMDAPVSGGVGAARSGNLTFMVGGVEDEFAAAQELLGCMGSNVVYCGAVGTGQAAKICNNMLLAISMIGTAEAMNLGIRLGLDPKLLAKILNMSSGRCWSSDTYNPVPGVMDGVPSANNYQGGFGATLMAKDLGLAQDSATSTKSPILLGSLAHQIYRMMCAKGYSKKDFSSVFQFLREEETF</sequence>